<gene>
    <name evidence="1" type="primary">glgC</name>
    <name type="ordered locus">Deide_11310</name>
</gene>
<reference key="1">
    <citation type="journal article" date="2009" name="PLoS Genet.">
        <title>Alliance of proteomics and genomics to unravel the specificities of Sahara bacterium Deinococcus deserti.</title>
        <authorList>
            <person name="de Groot A."/>
            <person name="Dulermo R."/>
            <person name="Ortet P."/>
            <person name="Blanchard L."/>
            <person name="Guerin P."/>
            <person name="Fernandez B."/>
            <person name="Vacherie B."/>
            <person name="Dossat C."/>
            <person name="Jolivet E."/>
            <person name="Siguier P."/>
            <person name="Chandler M."/>
            <person name="Barakat M."/>
            <person name="Dedieu A."/>
            <person name="Barbe V."/>
            <person name="Heulin T."/>
            <person name="Sommer S."/>
            <person name="Achouak W."/>
            <person name="Armengaud J."/>
        </authorList>
    </citation>
    <scope>NUCLEOTIDE SEQUENCE [LARGE SCALE GENOMIC DNA]</scope>
    <source>
        <strain>DSM 17065 / CIP 109153 / LMG 22923 / VCD115</strain>
    </source>
</reference>
<proteinExistence type="inferred from homology"/>
<name>GLGC_DEIDV</name>
<feature type="chain" id="PRO_1000212298" description="Glucose-1-phosphate adenylyltransferase">
    <location>
        <begin position="1"/>
        <end position="413"/>
    </location>
</feature>
<feature type="binding site" evidence="1">
    <location>
        <position position="102"/>
    </location>
    <ligand>
        <name>alpha-D-glucose 1-phosphate</name>
        <dbReference type="ChEBI" id="CHEBI:58601"/>
    </ligand>
</feature>
<feature type="binding site" evidence="1">
    <location>
        <position position="167"/>
    </location>
    <ligand>
        <name>alpha-D-glucose 1-phosphate</name>
        <dbReference type="ChEBI" id="CHEBI:58601"/>
    </ligand>
</feature>
<feature type="binding site" evidence="1">
    <location>
        <begin position="182"/>
        <end position="183"/>
    </location>
    <ligand>
        <name>alpha-D-glucose 1-phosphate</name>
        <dbReference type="ChEBI" id="CHEBI:58601"/>
    </ligand>
</feature>
<feature type="binding site" evidence="1">
    <location>
        <position position="200"/>
    </location>
    <ligand>
        <name>alpha-D-glucose 1-phosphate</name>
        <dbReference type="ChEBI" id="CHEBI:58601"/>
    </ligand>
</feature>
<dbReference type="EC" id="2.7.7.27" evidence="1"/>
<dbReference type="EMBL" id="CP001114">
    <property type="protein sequence ID" value="ACO46035.1"/>
    <property type="molecule type" value="Genomic_DNA"/>
</dbReference>
<dbReference type="RefSeq" id="WP_012693158.1">
    <property type="nucleotide sequence ID" value="NC_012526.1"/>
</dbReference>
<dbReference type="SMR" id="C1CV18"/>
<dbReference type="STRING" id="546414.Deide_11310"/>
<dbReference type="PaxDb" id="546414-Deide_11310"/>
<dbReference type="KEGG" id="ddr:Deide_11310"/>
<dbReference type="eggNOG" id="COG0448">
    <property type="taxonomic scope" value="Bacteria"/>
</dbReference>
<dbReference type="HOGENOM" id="CLU_029499_14_1_0"/>
<dbReference type="OrthoDB" id="9801810at2"/>
<dbReference type="UniPathway" id="UPA00164"/>
<dbReference type="Proteomes" id="UP000002208">
    <property type="component" value="Chromosome"/>
</dbReference>
<dbReference type="GO" id="GO:0005524">
    <property type="term" value="F:ATP binding"/>
    <property type="evidence" value="ECO:0007669"/>
    <property type="project" value="UniProtKB-KW"/>
</dbReference>
<dbReference type="GO" id="GO:0008878">
    <property type="term" value="F:glucose-1-phosphate adenylyltransferase activity"/>
    <property type="evidence" value="ECO:0007669"/>
    <property type="project" value="UniProtKB-UniRule"/>
</dbReference>
<dbReference type="GO" id="GO:0005978">
    <property type="term" value="P:glycogen biosynthetic process"/>
    <property type="evidence" value="ECO:0007669"/>
    <property type="project" value="UniProtKB-UniRule"/>
</dbReference>
<dbReference type="CDD" id="cd02508">
    <property type="entry name" value="ADP_Glucose_PP"/>
    <property type="match status" value="1"/>
</dbReference>
<dbReference type="CDD" id="cd04651">
    <property type="entry name" value="LbH_G1P_AT_C"/>
    <property type="match status" value="1"/>
</dbReference>
<dbReference type="Gene3D" id="2.160.10.10">
    <property type="entry name" value="Hexapeptide repeat proteins"/>
    <property type="match status" value="1"/>
</dbReference>
<dbReference type="Gene3D" id="3.90.550.10">
    <property type="entry name" value="Spore Coat Polysaccharide Biosynthesis Protein SpsA, Chain A"/>
    <property type="match status" value="1"/>
</dbReference>
<dbReference type="HAMAP" id="MF_00624">
    <property type="entry name" value="GlgC"/>
    <property type="match status" value="1"/>
</dbReference>
<dbReference type="InterPro" id="IPR011831">
    <property type="entry name" value="ADP-Glc_PPase"/>
</dbReference>
<dbReference type="InterPro" id="IPR005836">
    <property type="entry name" value="ADP_Glu_pyroP_CS"/>
</dbReference>
<dbReference type="InterPro" id="IPR023049">
    <property type="entry name" value="GlgC_bac"/>
</dbReference>
<dbReference type="InterPro" id="IPR056818">
    <property type="entry name" value="GlmU/GlgC-like_hexapep"/>
</dbReference>
<dbReference type="InterPro" id="IPR005835">
    <property type="entry name" value="NTP_transferase_dom"/>
</dbReference>
<dbReference type="InterPro" id="IPR029044">
    <property type="entry name" value="Nucleotide-diphossugar_trans"/>
</dbReference>
<dbReference type="InterPro" id="IPR011004">
    <property type="entry name" value="Trimer_LpxA-like_sf"/>
</dbReference>
<dbReference type="NCBIfam" id="TIGR02091">
    <property type="entry name" value="glgC"/>
    <property type="match status" value="1"/>
</dbReference>
<dbReference type="NCBIfam" id="NF001947">
    <property type="entry name" value="PRK00725.1"/>
    <property type="match status" value="1"/>
</dbReference>
<dbReference type="NCBIfam" id="NF002023">
    <property type="entry name" value="PRK00844.1"/>
    <property type="match status" value="1"/>
</dbReference>
<dbReference type="PANTHER" id="PTHR43523:SF2">
    <property type="entry name" value="GLUCOSE-1-PHOSPHATE ADENYLYLTRANSFERASE"/>
    <property type="match status" value="1"/>
</dbReference>
<dbReference type="PANTHER" id="PTHR43523">
    <property type="entry name" value="GLUCOSE-1-PHOSPHATE ADENYLYLTRANSFERASE-RELATED"/>
    <property type="match status" value="1"/>
</dbReference>
<dbReference type="Pfam" id="PF24894">
    <property type="entry name" value="Hexapep_GlmU"/>
    <property type="match status" value="1"/>
</dbReference>
<dbReference type="Pfam" id="PF00483">
    <property type="entry name" value="NTP_transferase"/>
    <property type="match status" value="1"/>
</dbReference>
<dbReference type="SUPFAM" id="SSF53448">
    <property type="entry name" value="Nucleotide-diphospho-sugar transferases"/>
    <property type="match status" value="1"/>
</dbReference>
<dbReference type="SUPFAM" id="SSF51161">
    <property type="entry name" value="Trimeric LpxA-like enzymes"/>
    <property type="match status" value="1"/>
</dbReference>
<dbReference type="PROSITE" id="PS00808">
    <property type="entry name" value="ADP_GLC_PYROPHOSPH_1"/>
    <property type="match status" value="1"/>
</dbReference>
<dbReference type="PROSITE" id="PS00809">
    <property type="entry name" value="ADP_GLC_PYROPHOSPH_2"/>
    <property type="match status" value="1"/>
</dbReference>
<keyword id="KW-0067">ATP-binding</keyword>
<keyword id="KW-0119">Carbohydrate metabolism</keyword>
<keyword id="KW-0320">Glycogen biosynthesis</keyword>
<keyword id="KW-0321">Glycogen metabolism</keyword>
<keyword id="KW-0547">Nucleotide-binding</keyword>
<keyword id="KW-0548">Nucleotidyltransferase</keyword>
<keyword id="KW-1185">Reference proteome</keyword>
<keyword id="KW-0808">Transferase</keyword>
<protein>
    <recommendedName>
        <fullName evidence="1">Glucose-1-phosphate adenylyltransferase</fullName>
        <ecNumber evidence="1">2.7.7.27</ecNumber>
    </recommendedName>
    <alternativeName>
        <fullName evidence="1">ADP-glucose pyrophosphorylase</fullName>
        <shortName evidence="1">ADPGlc PPase</shortName>
    </alternativeName>
    <alternativeName>
        <fullName evidence="1">ADP-glucose synthase</fullName>
    </alternativeName>
</protein>
<comment type="function">
    <text evidence="1">Involved in the biosynthesis of ADP-glucose, a building block required for the elongation reactions to produce glycogen. Catalyzes the reaction between ATP and alpha-D-glucose 1-phosphate (G1P) to produce pyrophosphate and ADP-Glc.</text>
</comment>
<comment type="catalytic activity">
    <reaction evidence="1">
        <text>alpha-D-glucose 1-phosphate + ATP + H(+) = ADP-alpha-D-glucose + diphosphate</text>
        <dbReference type="Rhea" id="RHEA:12120"/>
        <dbReference type="ChEBI" id="CHEBI:15378"/>
        <dbReference type="ChEBI" id="CHEBI:30616"/>
        <dbReference type="ChEBI" id="CHEBI:33019"/>
        <dbReference type="ChEBI" id="CHEBI:57498"/>
        <dbReference type="ChEBI" id="CHEBI:58601"/>
        <dbReference type="EC" id="2.7.7.27"/>
    </reaction>
</comment>
<comment type="pathway">
    <text evidence="1">Glycan biosynthesis; glycogen biosynthesis.</text>
</comment>
<comment type="subunit">
    <text evidence="1">Homotetramer.</text>
</comment>
<comment type="similarity">
    <text evidence="1">Belongs to the bacterial/plant glucose-1-phosphate adenylyltransferase family.</text>
</comment>
<accession>C1CV18</accession>
<organism>
    <name type="scientific">Deinococcus deserti (strain DSM 17065 / CIP 109153 / LMG 22923 / VCD115)</name>
    <dbReference type="NCBI Taxonomy" id="546414"/>
    <lineage>
        <taxon>Bacteria</taxon>
        <taxon>Thermotogati</taxon>
        <taxon>Deinococcota</taxon>
        <taxon>Deinococci</taxon>
        <taxon>Deinococcales</taxon>
        <taxon>Deinococcaceae</taxon>
        <taxon>Deinococcus</taxon>
    </lineage>
</organism>
<sequence length="413" mass="46507">MKPRVLGMILAGGQGSRLAPLTQKRSKPSVPFGSKYRIIDFAINNFMNSGVFSIYVLTQYKAQSLTEHIQRGWRFGTFLSDYFITLVPAQMYRYEELGAVWYRGTADAVYQNMHLIDNFDADYVAIFSGDHIYKMNVEHMLEKHIESRADVTIAAYPMPRSQAHQFGVMQVDAGWRVTEFLEKVPDPPGLPENPDLSLTSMGNYIFSRRALEELLHTSISGQEDGFDFGHNVIPRALADGYHVQAYDFHRNPIPGQSNPNLYWRDVGTIDAYYEANMDLISINPEFDIYNPSWPLRTSSEFSPPAKFVHESDGRKGQAFNSVMAGGVIISGATVRDSVLGRNIRAHSYALIESCVLFDDVEVGRHSHLNRAIVDKNVKIPPGTKIGVDHDHDRERGFTVTESGVVVVPKSYTF</sequence>
<evidence type="ECO:0000255" key="1">
    <source>
        <dbReference type="HAMAP-Rule" id="MF_00624"/>
    </source>
</evidence>